<feature type="chain" id="PRO_0000211014" description="Ubiquilin-3">
    <location>
        <begin position="1"/>
        <end position="658"/>
    </location>
</feature>
<feature type="domain" description="Ubiquitin-like" evidence="3">
    <location>
        <begin position="22"/>
        <end position="96"/>
    </location>
</feature>
<feature type="domain" description="STI1" evidence="1">
    <location>
        <begin position="194"/>
        <end position="233"/>
    </location>
</feature>
<feature type="domain" description="UBA" evidence="2">
    <location>
        <begin position="614"/>
        <end position="658"/>
    </location>
</feature>
<feature type="region of interest" description="Disordered" evidence="4">
    <location>
        <begin position="280"/>
        <end position="336"/>
    </location>
</feature>
<feature type="region of interest" description="Disordered" evidence="4">
    <location>
        <begin position="362"/>
        <end position="478"/>
    </location>
</feature>
<feature type="compositionally biased region" description="Low complexity" evidence="4">
    <location>
        <begin position="280"/>
        <end position="291"/>
    </location>
</feature>
<feature type="compositionally biased region" description="Gly residues" evidence="4">
    <location>
        <begin position="312"/>
        <end position="323"/>
    </location>
</feature>
<feature type="compositionally biased region" description="Polar residues" evidence="4">
    <location>
        <begin position="362"/>
        <end position="379"/>
    </location>
</feature>
<feature type="compositionally biased region" description="Polar residues" evidence="4">
    <location>
        <begin position="389"/>
        <end position="400"/>
    </location>
</feature>
<feature type="compositionally biased region" description="Polar residues" evidence="4">
    <location>
        <begin position="438"/>
        <end position="469"/>
    </location>
</feature>
<sequence length="658" mass="70753">MAKSGEALPQGSLAPAQDSQLIRVTVKTPKDKEDFSVVDTCTIRQLKEKISHRFKAHPNQLVLIFAGKILKDPDSLAQCGVRDGLTVHLVIKMQRRTIGTECPSPPVSIPGPNPGEIPQSSSVYSVDGSPSFSLGVLTGLSGLGLTSGSFSDQPGSLMWQHISVPELVAQLVDDPFIQGLLSNTGLVRQLVLDNPHMQHLIQQNPEIGHILNNPEIMRQTMEFLRNPSMMQEMMRSQDRALSNLESIPGGYNVLRTMYTDIMDPMLNAVQEQFGGNPFVTATTASTTTTSSQPSRTENCDPLPNPWTSTYGVSGGRQGRGGRQSGDQDASENRNRLPSFLGNIGLFDYLQQLHETSQSLESYLQGTVPTSNPSQESPLSGNRVPPTLPSSPKSGSGQSLPKESVAIKGKSSCPAFLRHSTENSTGQGGSLHDAGKGSTGPSTSLPNLTSQIGDSANRSSFVSTPSSLMSATPGVPESPWLPPTGYSRSLRSAGTNQVPRIQNEIHQQLPLLLHLQTAMANPRVMQALLQIEQGLQILATEAPRLLLWFMPCLTGLNGVTGGTEAREGVVMSEDPRPTPTPQISLAQGSTELGIHSSPFLQVLQALASTNPQQLQLEAHFRVQLEQLRAMGFLNLEANLQALIATEGDVDAAVEKLRKS</sequence>
<accession>Q8C5U9</accession>
<name>UBQL3_MOUSE</name>
<reference key="1">
    <citation type="journal article" date="2005" name="Science">
        <title>The transcriptional landscape of the mammalian genome.</title>
        <authorList>
            <person name="Carninci P."/>
            <person name="Kasukawa T."/>
            <person name="Katayama S."/>
            <person name="Gough J."/>
            <person name="Frith M.C."/>
            <person name="Maeda N."/>
            <person name="Oyama R."/>
            <person name="Ravasi T."/>
            <person name="Lenhard B."/>
            <person name="Wells C."/>
            <person name="Kodzius R."/>
            <person name="Shimokawa K."/>
            <person name="Bajic V.B."/>
            <person name="Brenner S.E."/>
            <person name="Batalov S."/>
            <person name="Forrest A.R."/>
            <person name="Zavolan M."/>
            <person name="Davis M.J."/>
            <person name="Wilming L.G."/>
            <person name="Aidinis V."/>
            <person name="Allen J.E."/>
            <person name="Ambesi-Impiombato A."/>
            <person name="Apweiler R."/>
            <person name="Aturaliya R.N."/>
            <person name="Bailey T.L."/>
            <person name="Bansal M."/>
            <person name="Baxter L."/>
            <person name="Beisel K.W."/>
            <person name="Bersano T."/>
            <person name="Bono H."/>
            <person name="Chalk A.M."/>
            <person name="Chiu K.P."/>
            <person name="Choudhary V."/>
            <person name="Christoffels A."/>
            <person name="Clutterbuck D.R."/>
            <person name="Crowe M.L."/>
            <person name="Dalla E."/>
            <person name="Dalrymple B.P."/>
            <person name="de Bono B."/>
            <person name="Della Gatta G."/>
            <person name="di Bernardo D."/>
            <person name="Down T."/>
            <person name="Engstrom P."/>
            <person name="Fagiolini M."/>
            <person name="Faulkner G."/>
            <person name="Fletcher C.F."/>
            <person name="Fukushima T."/>
            <person name="Furuno M."/>
            <person name="Futaki S."/>
            <person name="Gariboldi M."/>
            <person name="Georgii-Hemming P."/>
            <person name="Gingeras T.R."/>
            <person name="Gojobori T."/>
            <person name="Green R.E."/>
            <person name="Gustincich S."/>
            <person name="Harbers M."/>
            <person name="Hayashi Y."/>
            <person name="Hensch T.K."/>
            <person name="Hirokawa N."/>
            <person name="Hill D."/>
            <person name="Huminiecki L."/>
            <person name="Iacono M."/>
            <person name="Ikeo K."/>
            <person name="Iwama A."/>
            <person name="Ishikawa T."/>
            <person name="Jakt M."/>
            <person name="Kanapin A."/>
            <person name="Katoh M."/>
            <person name="Kawasawa Y."/>
            <person name="Kelso J."/>
            <person name="Kitamura H."/>
            <person name="Kitano H."/>
            <person name="Kollias G."/>
            <person name="Krishnan S.P."/>
            <person name="Kruger A."/>
            <person name="Kummerfeld S.K."/>
            <person name="Kurochkin I.V."/>
            <person name="Lareau L.F."/>
            <person name="Lazarevic D."/>
            <person name="Lipovich L."/>
            <person name="Liu J."/>
            <person name="Liuni S."/>
            <person name="McWilliam S."/>
            <person name="Madan Babu M."/>
            <person name="Madera M."/>
            <person name="Marchionni L."/>
            <person name="Matsuda H."/>
            <person name="Matsuzawa S."/>
            <person name="Miki H."/>
            <person name="Mignone F."/>
            <person name="Miyake S."/>
            <person name="Morris K."/>
            <person name="Mottagui-Tabar S."/>
            <person name="Mulder N."/>
            <person name="Nakano N."/>
            <person name="Nakauchi H."/>
            <person name="Ng P."/>
            <person name="Nilsson R."/>
            <person name="Nishiguchi S."/>
            <person name="Nishikawa S."/>
            <person name="Nori F."/>
            <person name="Ohara O."/>
            <person name="Okazaki Y."/>
            <person name="Orlando V."/>
            <person name="Pang K.C."/>
            <person name="Pavan W.J."/>
            <person name="Pavesi G."/>
            <person name="Pesole G."/>
            <person name="Petrovsky N."/>
            <person name="Piazza S."/>
            <person name="Reed J."/>
            <person name="Reid J.F."/>
            <person name="Ring B.Z."/>
            <person name="Ringwald M."/>
            <person name="Rost B."/>
            <person name="Ruan Y."/>
            <person name="Salzberg S.L."/>
            <person name="Sandelin A."/>
            <person name="Schneider C."/>
            <person name="Schoenbach C."/>
            <person name="Sekiguchi K."/>
            <person name="Semple C.A."/>
            <person name="Seno S."/>
            <person name="Sessa L."/>
            <person name="Sheng Y."/>
            <person name="Shibata Y."/>
            <person name="Shimada H."/>
            <person name="Shimada K."/>
            <person name="Silva D."/>
            <person name="Sinclair B."/>
            <person name="Sperling S."/>
            <person name="Stupka E."/>
            <person name="Sugiura K."/>
            <person name="Sultana R."/>
            <person name="Takenaka Y."/>
            <person name="Taki K."/>
            <person name="Tammoja K."/>
            <person name="Tan S.L."/>
            <person name="Tang S."/>
            <person name="Taylor M.S."/>
            <person name="Tegner J."/>
            <person name="Teichmann S.A."/>
            <person name="Ueda H.R."/>
            <person name="van Nimwegen E."/>
            <person name="Verardo R."/>
            <person name="Wei C.L."/>
            <person name="Yagi K."/>
            <person name="Yamanishi H."/>
            <person name="Zabarovsky E."/>
            <person name="Zhu S."/>
            <person name="Zimmer A."/>
            <person name="Hide W."/>
            <person name="Bult C."/>
            <person name="Grimmond S.M."/>
            <person name="Teasdale R.D."/>
            <person name="Liu E.T."/>
            <person name="Brusic V."/>
            <person name="Quackenbush J."/>
            <person name="Wahlestedt C."/>
            <person name="Mattick J.S."/>
            <person name="Hume D.A."/>
            <person name="Kai C."/>
            <person name="Sasaki D."/>
            <person name="Tomaru Y."/>
            <person name="Fukuda S."/>
            <person name="Kanamori-Katayama M."/>
            <person name="Suzuki M."/>
            <person name="Aoki J."/>
            <person name="Arakawa T."/>
            <person name="Iida J."/>
            <person name="Imamura K."/>
            <person name="Itoh M."/>
            <person name="Kato T."/>
            <person name="Kawaji H."/>
            <person name="Kawagashira N."/>
            <person name="Kawashima T."/>
            <person name="Kojima M."/>
            <person name="Kondo S."/>
            <person name="Konno H."/>
            <person name="Nakano K."/>
            <person name="Ninomiya N."/>
            <person name="Nishio T."/>
            <person name="Okada M."/>
            <person name="Plessy C."/>
            <person name="Shibata K."/>
            <person name="Shiraki T."/>
            <person name="Suzuki S."/>
            <person name="Tagami M."/>
            <person name="Waki K."/>
            <person name="Watahiki A."/>
            <person name="Okamura-Oho Y."/>
            <person name="Suzuki H."/>
            <person name="Kawai J."/>
            <person name="Hayashizaki Y."/>
        </authorList>
    </citation>
    <scope>NUCLEOTIDE SEQUENCE [LARGE SCALE MRNA]</scope>
    <source>
        <strain>C57BL/6J</strain>
        <tissue>Testis</tissue>
    </source>
</reference>
<reference key="2">
    <citation type="journal article" date="2015" name="Mol. Reprod. Dev.">
        <title>Ubqln3, a testis-specific gene, is dispensable for embryonic development and spermatogenesis in mice.</title>
        <authorList>
            <person name="Yuan S."/>
            <person name="Qin W."/>
            <person name="Riordan C.R."/>
            <person name="Mcswiggin H."/>
            <person name="Zheng H."/>
            <person name="Yan W."/>
        </authorList>
    </citation>
    <scope>TISSUE SPECIFICITY</scope>
</reference>
<dbReference type="EMBL" id="AK077072">
    <property type="protein sequence ID" value="BAC36593.1"/>
    <property type="molecule type" value="mRNA"/>
</dbReference>
<dbReference type="CCDS" id="CCDS21610.1"/>
<dbReference type="RefSeq" id="NP_941025.1">
    <property type="nucleotide sequence ID" value="NM_198623.3"/>
</dbReference>
<dbReference type="RefSeq" id="XP_036009013.1">
    <property type="nucleotide sequence ID" value="XM_036153120.1"/>
</dbReference>
<dbReference type="SMR" id="Q8C5U9"/>
<dbReference type="BioGRID" id="232612">
    <property type="interactions" value="2"/>
</dbReference>
<dbReference type="FunCoup" id="Q8C5U9">
    <property type="interactions" value="414"/>
</dbReference>
<dbReference type="STRING" id="10090.ENSMUSP00000055229"/>
<dbReference type="GlyGen" id="Q8C5U9">
    <property type="glycosylation" value="2 sites"/>
</dbReference>
<dbReference type="iPTMnet" id="Q8C5U9"/>
<dbReference type="PhosphoSitePlus" id="Q8C5U9"/>
<dbReference type="SwissPalm" id="Q8C5U9"/>
<dbReference type="jPOST" id="Q8C5U9"/>
<dbReference type="PaxDb" id="10090-ENSMUSP00000055229"/>
<dbReference type="ProteomicsDB" id="298370"/>
<dbReference type="Antibodypedia" id="11058">
    <property type="antibodies" value="221 antibodies from 26 providers"/>
</dbReference>
<dbReference type="DNASU" id="244178"/>
<dbReference type="Ensembl" id="ENSMUST00000057254.6">
    <property type="protein sequence ID" value="ENSMUSP00000055229.6"/>
    <property type="gene ID" value="ENSMUSG00000051618.6"/>
</dbReference>
<dbReference type="GeneID" id="244178"/>
<dbReference type="KEGG" id="mmu:244178"/>
<dbReference type="UCSC" id="uc009ivk.1">
    <property type="organism name" value="mouse"/>
</dbReference>
<dbReference type="AGR" id="MGI:3045291"/>
<dbReference type="CTD" id="50613"/>
<dbReference type="MGI" id="MGI:3045291">
    <property type="gene designation" value="Ubqln3"/>
</dbReference>
<dbReference type="VEuPathDB" id="HostDB:ENSMUSG00000051618"/>
<dbReference type="eggNOG" id="KOG0010">
    <property type="taxonomic scope" value="Eukaryota"/>
</dbReference>
<dbReference type="GeneTree" id="ENSGT00940000162912"/>
<dbReference type="HOGENOM" id="CLU_024293_3_0_1"/>
<dbReference type="InParanoid" id="Q8C5U9"/>
<dbReference type="OMA" id="LLWFMPC"/>
<dbReference type="OrthoDB" id="267397at2759"/>
<dbReference type="PhylomeDB" id="Q8C5U9"/>
<dbReference type="TreeFam" id="TF314412"/>
<dbReference type="BioGRID-ORCS" id="244178">
    <property type="hits" value="1 hit in 77 CRISPR screens"/>
</dbReference>
<dbReference type="PRO" id="PR:Q8C5U9"/>
<dbReference type="Proteomes" id="UP000000589">
    <property type="component" value="Chromosome 7"/>
</dbReference>
<dbReference type="RNAct" id="Q8C5U9">
    <property type="molecule type" value="protein"/>
</dbReference>
<dbReference type="Bgee" id="ENSMUSG00000051618">
    <property type="expression patterns" value="Expressed in seminiferous tubule of testis and 16 other cell types or tissues"/>
</dbReference>
<dbReference type="ExpressionAtlas" id="Q8C5U9">
    <property type="expression patterns" value="baseline and differential"/>
</dbReference>
<dbReference type="CDD" id="cd14399">
    <property type="entry name" value="UBA_PLICs"/>
    <property type="match status" value="1"/>
</dbReference>
<dbReference type="CDD" id="cd01808">
    <property type="entry name" value="Ubl_PLICs"/>
    <property type="match status" value="1"/>
</dbReference>
<dbReference type="FunFam" id="1.10.260.100:FF:000001">
    <property type="entry name" value="Ubiquilin 1"/>
    <property type="match status" value="1"/>
</dbReference>
<dbReference type="FunFam" id="1.10.8.10:FF:000082">
    <property type="entry name" value="Ubiquilin 3"/>
    <property type="match status" value="1"/>
</dbReference>
<dbReference type="FunFam" id="3.10.20.90:FF:000198">
    <property type="entry name" value="Ubiquilin 3"/>
    <property type="match status" value="1"/>
</dbReference>
<dbReference type="Gene3D" id="1.10.260.100">
    <property type="match status" value="1"/>
</dbReference>
<dbReference type="Gene3D" id="1.10.8.10">
    <property type="entry name" value="DNA helicase RuvA subunit, C-terminal domain"/>
    <property type="match status" value="1"/>
</dbReference>
<dbReference type="Gene3D" id="3.10.20.90">
    <property type="entry name" value="Phosphatidylinositol 3-kinase Catalytic Subunit, Chain A, domain 1"/>
    <property type="match status" value="1"/>
</dbReference>
<dbReference type="InterPro" id="IPR006636">
    <property type="entry name" value="STI1_HS-bd"/>
</dbReference>
<dbReference type="InterPro" id="IPR015940">
    <property type="entry name" value="UBA"/>
</dbReference>
<dbReference type="InterPro" id="IPR009060">
    <property type="entry name" value="UBA-like_sf"/>
</dbReference>
<dbReference type="InterPro" id="IPR015496">
    <property type="entry name" value="Ubiquilin"/>
</dbReference>
<dbReference type="InterPro" id="IPR000626">
    <property type="entry name" value="Ubiquitin-like_dom"/>
</dbReference>
<dbReference type="InterPro" id="IPR029071">
    <property type="entry name" value="Ubiquitin-like_domsf"/>
</dbReference>
<dbReference type="PANTHER" id="PTHR10677">
    <property type="entry name" value="UBIQUILIN"/>
    <property type="match status" value="1"/>
</dbReference>
<dbReference type="PANTHER" id="PTHR10677:SF4">
    <property type="entry name" value="UBIQUILIN-3"/>
    <property type="match status" value="1"/>
</dbReference>
<dbReference type="Pfam" id="PF00240">
    <property type="entry name" value="ubiquitin"/>
    <property type="match status" value="1"/>
</dbReference>
<dbReference type="Pfam" id="PF23195">
    <property type="entry name" value="UBQLN1"/>
    <property type="match status" value="1"/>
</dbReference>
<dbReference type="SMART" id="SM00727">
    <property type="entry name" value="STI1"/>
    <property type="match status" value="1"/>
</dbReference>
<dbReference type="SMART" id="SM00165">
    <property type="entry name" value="UBA"/>
    <property type="match status" value="1"/>
</dbReference>
<dbReference type="SMART" id="SM00213">
    <property type="entry name" value="UBQ"/>
    <property type="match status" value="1"/>
</dbReference>
<dbReference type="SUPFAM" id="SSF46934">
    <property type="entry name" value="UBA-like"/>
    <property type="match status" value="1"/>
</dbReference>
<dbReference type="SUPFAM" id="SSF54236">
    <property type="entry name" value="Ubiquitin-like"/>
    <property type="match status" value="1"/>
</dbReference>
<dbReference type="PROSITE" id="PS50030">
    <property type="entry name" value="UBA"/>
    <property type="match status" value="1"/>
</dbReference>
<dbReference type="PROSITE" id="PS50053">
    <property type="entry name" value="UBIQUITIN_2"/>
    <property type="match status" value="1"/>
</dbReference>
<gene>
    <name type="primary">Ubqln3</name>
</gene>
<protein>
    <recommendedName>
        <fullName>Ubiquilin-3</fullName>
    </recommendedName>
</protein>
<proteinExistence type="evidence at protein level"/>
<evidence type="ECO:0000255" key="1"/>
<evidence type="ECO:0000255" key="2">
    <source>
        <dbReference type="PROSITE-ProRule" id="PRU00212"/>
    </source>
</evidence>
<evidence type="ECO:0000255" key="3">
    <source>
        <dbReference type="PROSITE-ProRule" id="PRU00214"/>
    </source>
</evidence>
<evidence type="ECO:0000256" key="4">
    <source>
        <dbReference type="SAM" id="MobiDB-lite"/>
    </source>
</evidence>
<evidence type="ECO:0000269" key="5">
    <source>
    </source>
</evidence>
<organism>
    <name type="scientific">Mus musculus</name>
    <name type="common">Mouse</name>
    <dbReference type="NCBI Taxonomy" id="10090"/>
    <lineage>
        <taxon>Eukaryota</taxon>
        <taxon>Metazoa</taxon>
        <taxon>Chordata</taxon>
        <taxon>Craniata</taxon>
        <taxon>Vertebrata</taxon>
        <taxon>Euteleostomi</taxon>
        <taxon>Mammalia</taxon>
        <taxon>Eutheria</taxon>
        <taxon>Euarchontoglires</taxon>
        <taxon>Glires</taxon>
        <taxon>Rodentia</taxon>
        <taxon>Myomorpha</taxon>
        <taxon>Muroidea</taxon>
        <taxon>Muridae</taxon>
        <taxon>Murinae</taxon>
        <taxon>Mus</taxon>
        <taxon>Mus</taxon>
    </lineage>
</organism>
<keyword id="KW-1185">Reference proteome</keyword>
<comment type="tissue specificity">
    <text evidence="5">Testis-specific (at protein level).</text>
</comment>